<proteinExistence type="inferred from homology"/>
<name>UBIE_CAMJJ</name>
<evidence type="ECO:0000255" key="1">
    <source>
        <dbReference type="HAMAP-Rule" id="MF_01813"/>
    </source>
</evidence>
<sequence>MQKQEKIIEMFNQIAPTYDKANRILSFGADVAWRKKACQRVMSLYLKKDLKIADIACGTGDMIEIWQESALKMEKNILNIKGIDPSSGMLNVAKEKFPNVEFIEAGAQNLPLESQSLDILSISYGIRNVVERQKALSEFARVLQKDGILVVLEFTKREKGGFIAACRDFYLKNILPSIGGIISKNKSAYEYLPNSIEGFLSKEEFILELKNAGFEILDYKSFSFGVSSMFIAKKL</sequence>
<accession>A1VY43</accession>
<protein>
    <recommendedName>
        <fullName evidence="1">Ubiquinone/menaquinone biosynthesis C-methyltransferase UbiE</fullName>
        <ecNumber evidence="1">2.1.1.163</ecNumber>
        <ecNumber evidence="1">2.1.1.201</ecNumber>
    </recommendedName>
    <alternativeName>
        <fullName evidence="1">2-methoxy-6-polyprenyl-1,4-benzoquinol methylase</fullName>
    </alternativeName>
    <alternativeName>
        <fullName evidence="1">Demethylmenaquinone methyltransferase</fullName>
    </alternativeName>
</protein>
<feature type="chain" id="PRO_1000056238" description="Ubiquinone/menaquinone biosynthesis C-methyltransferase UbiE">
    <location>
        <begin position="1"/>
        <end position="235"/>
    </location>
</feature>
<feature type="binding site" evidence="1">
    <location>
        <position position="59"/>
    </location>
    <ligand>
        <name>S-adenosyl-L-methionine</name>
        <dbReference type="ChEBI" id="CHEBI:59789"/>
    </ligand>
</feature>
<feature type="binding site" evidence="1">
    <location>
        <position position="84"/>
    </location>
    <ligand>
        <name>S-adenosyl-L-methionine</name>
        <dbReference type="ChEBI" id="CHEBI:59789"/>
    </ligand>
</feature>
<feature type="binding site" evidence="1">
    <location>
        <position position="123"/>
    </location>
    <ligand>
        <name>S-adenosyl-L-methionine</name>
        <dbReference type="ChEBI" id="CHEBI:59789"/>
    </ligand>
</feature>
<dbReference type="EC" id="2.1.1.163" evidence="1"/>
<dbReference type="EC" id="2.1.1.201" evidence="1"/>
<dbReference type="EMBL" id="CP000538">
    <property type="protein sequence ID" value="EAQ73327.1"/>
    <property type="molecule type" value="Genomic_DNA"/>
</dbReference>
<dbReference type="RefSeq" id="WP_002859428.1">
    <property type="nucleotide sequence ID" value="NC_008787.1"/>
</dbReference>
<dbReference type="SMR" id="A1VY43"/>
<dbReference type="KEGG" id="cjj:CJJ81176_0346"/>
<dbReference type="eggNOG" id="COG2226">
    <property type="taxonomic scope" value="Bacteria"/>
</dbReference>
<dbReference type="HOGENOM" id="CLU_037990_0_0_7"/>
<dbReference type="UniPathway" id="UPA00079">
    <property type="reaction ID" value="UER00169"/>
</dbReference>
<dbReference type="UniPathway" id="UPA00232"/>
<dbReference type="Proteomes" id="UP000000646">
    <property type="component" value="Chromosome"/>
</dbReference>
<dbReference type="GO" id="GO:0008425">
    <property type="term" value="F:2-methoxy-6-polyprenyl-1,4-benzoquinol methyltransferase activity"/>
    <property type="evidence" value="ECO:0007669"/>
    <property type="project" value="UniProtKB-EC"/>
</dbReference>
<dbReference type="GO" id="GO:0043770">
    <property type="term" value="F:demethylmenaquinone methyltransferase activity"/>
    <property type="evidence" value="ECO:0007669"/>
    <property type="project" value="UniProtKB-UniRule"/>
</dbReference>
<dbReference type="GO" id="GO:0009234">
    <property type="term" value="P:menaquinone biosynthetic process"/>
    <property type="evidence" value="ECO:0007669"/>
    <property type="project" value="UniProtKB-UniRule"/>
</dbReference>
<dbReference type="GO" id="GO:0032259">
    <property type="term" value="P:methylation"/>
    <property type="evidence" value="ECO:0007669"/>
    <property type="project" value="UniProtKB-KW"/>
</dbReference>
<dbReference type="CDD" id="cd02440">
    <property type="entry name" value="AdoMet_MTases"/>
    <property type="match status" value="1"/>
</dbReference>
<dbReference type="Gene3D" id="3.40.50.150">
    <property type="entry name" value="Vaccinia Virus protein VP39"/>
    <property type="match status" value="1"/>
</dbReference>
<dbReference type="HAMAP" id="MF_01813">
    <property type="entry name" value="MenG_UbiE_methyltr"/>
    <property type="match status" value="1"/>
</dbReference>
<dbReference type="InterPro" id="IPR029063">
    <property type="entry name" value="SAM-dependent_MTases_sf"/>
</dbReference>
<dbReference type="InterPro" id="IPR004033">
    <property type="entry name" value="UbiE/COQ5_MeTrFase"/>
</dbReference>
<dbReference type="InterPro" id="IPR023576">
    <property type="entry name" value="UbiE/COQ5_MeTrFase_CS"/>
</dbReference>
<dbReference type="NCBIfam" id="TIGR01934">
    <property type="entry name" value="MenG_MenH_UbiE"/>
    <property type="match status" value="1"/>
</dbReference>
<dbReference type="NCBIfam" id="NF001244">
    <property type="entry name" value="PRK00216.1-5"/>
    <property type="match status" value="1"/>
</dbReference>
<dbReference type="PANTHER" id="PTHR43591:SF24">
    <property type="entry name" value="2-METHOXY-6-POLYPRENYL-1,4-BENZOQUINOL METHYLASE, MITOCHONDRIAL"/>
    <property type="match status" value="1"/>
</dbReference>
<dbReference type="PANTHER" id="PTHR43591">
    <property type="entry name" value="METHYLTRANSFERASE"/>
    <property type="match status" value="1"/>
</dbReference>
<dbReference type="Pfam" id="PF01209">
    <property type="entry name" value="Ubie_methyltran"/>
    <property type="match status" value="1"/>
</dbReference>
<dbReference type="SUPFAM" id="SSF53335">
    <property type="entry name" value="S-adenosyl-L-methionine-dependent methyltransferases"/>
    <property type="match status" value="1"/>
</dbReference>
<dbReference type="PROSITE" id="PS51608">
    <property type="entry name" value="SAM_MT_UBIE"/>
    <property type="match status" value="1"/>
</dbReference>
<dbReference type="PROSITE" id="PS01183">
    <property type="entry name" value="UBIE_1"/>
    <property type="match status" value="1"/>
</dbReference>
<dbReference type="PROSITE" id="PS01184">
    <property type="entry name" value="UBIE_2"/>
    <property type="match status" value="1"/>
</dbReference>
<organism>
    <name type="scientific">Campylobacter jejuni subsp. jejuni serotype O:23/36 (strain 81-176)</name>
    <dbReference type="NCBI Taxonomy" id="354242"/>
    <lineage>
        <taxon>Bacteria</taxon>
        <taxon>Pseudomonadati</taxon>
        <taxon>Campylobacterota</taxon>
        <taxon>Epsilonproteobacteria</taxon>
        <taxon>Campylobacterales</taxon>
        <taxon>Campylobacteraceae</taxon>
        <taxon>Campylobacter</taxon>
    </lineage>
</organism>
<gene>
    <name evidence="1" type="primary">ubiE</name>
    <name type="ordered locus">CJJ81176_0346</name>
</gene>
<keyword id="KW-0474">Menaquinone biosynthesis</keyword>
<keyword id="KW-0489">Methyltransferase</keyword>
<keyword id="KW-0949">S-adenosyl-L-methionine</keyword>
<keyword id="KW-0808">Transferase</keyword>
<keyword id="KW-0831">Ubiquinone biosynthesis</keyword>
<reference key="1">
    <citation type="submission" date="2006-12" db="EMBL/GenBank/DDBJ databases">
        <authorList>
            <person name="Fouts D.E."/>
            <person name="Nelson K.E."/>
            <person name="Sebastian Y."/>
        </authorList>
    </citation>
    <scope>NUCLEOTIDE SEQUENCE [LARGE SCALE GENOMIC DNA]</scope>
    <source>
        <strain>81-176</strain>
    </source>
</reference>
<comment type="function">
    <text evidence="1">Methyltransferase required for the conversion of demethylmenaquinol (DMKH2) to menaquinol (MKH2) and the conversion of 2-polyprenyl-6-methoxy-1,4-benzoquinol (DDMQH2) to 2-polyprenyl-3-methyl-6-methoxy-1,4-benzoquinol (DMQH2).</text>
</comment>
<comment type="catalytic activity">
    <reaction evidence="1">
        <text>a 2-demethylmenaquinol + S-adenosyl-L-methionine = a menaquinol + S-adenosyl-L-homocysteine + H(+)</text>
        <dbReference type="Rhea" id="RHEA:42640"/>
        <dbReference type="Rhea" id="RHEA-COMP:9539"/>
        <dbReference type="Rhea" id="RHEA-COMP:9563"/>
        <dbReference type="ChEBI" id="CHEBI:15378"/>
        <dbReference type="ChEBI" id="CHEBI:18151"/>
        <dbReference type="ChEBI" id="CHEBI:55437"/>
        <dbReference type="ChEBI" id="CHEBI:57856"/>
        <dbReference type="ChEBI" id="CHEBI:59789"/>
        <dbReference type="EC" id="2.1.1.163"/>
    </reaction>
</comment>
<comment type="catalytic activity">
    <reaction evidence="1">
        <text>a 2-methoxy-6-(all-trans-polyprenyl)benzene-1,4-diol + S-adenosyl-L-methionine = a 5-methoxy-2-methyl-3-(all-trans-polyprenyl)benzene-1,4-diol + S-adenosyl-L-homocysteine + H(+)</text>
        <dbReference type="Rhea" id="RHEA:28286"/>
        <dbReference type="Rhea" id="RHEA-COMP:10858"/>
        <dbReference type="Rhea" id="RHEA-COMP:10859"/>
        <dbReference type="ChEBI" id="CHEBI:15378"/>
        <dbReference type="ChEBI" id="CHEBI:57856"/>
        <dbReference type="ChEBI" id="CHEBI:59789"/>
        <dbReference type="ChEBI" id="CHEBI:84166"/>
        <dbReference type="ChEBI" id="CHEBI:84167"/>
        <dbReference type="EC" id="2.1.1.201"/>
    </reaction>
</comment>
<comment type="pathway">
    <text evidence="1">Quinol/quinone metabolism; menaquinone biosynthesis; menaquinol from 1,4-dihydroxy-2-naphthoate: step 2/2.</text>
</comment>
<comment type="pathway">
    <text evidence="1">Cofactor biosynthesis; ubiquinone biosynthesis.</text>
</comment>
<comment type="similarity">
    <text evidence="1">Belongs to the class I-like SAM-binding methyltransferase superfamily. MenG/UbiE family.</text>
</comment>